<reference key="1">
    <citation type="journal article" date="2008" name="J. Bacteriol.">
        <title>The complete genome sequence of Escherichia coli DH10B: insights into the biology of a laboratory workhorse.</title>
        <authorList>
            <person name="Durfee T."/>
            <person name="Nelson R."/>
            <person name="Baldwin S."/>
            <person name="Plunkett G. III"/>
            <person name="Burland V."/>
            <person name="Mau B."/>
            <person name="Petrosino J.F."/>
            <person name="Qin X."/>
            <person name="Muzny D.M."/>
            <person name="Ayele M."/>
            <person name="Gibbs R.A."/>
            <person name="Csorgo B."/>
            <person name="Posfai G."/>
            <person name="Weinstock G.M."/>
            <person name="Blattner F.R."/>
        </authorList>
    </citation>
    <scope>NUCLEOTIDE SEQUENCE [LARGE SCALE GENOMIC DNA]</scope>
    <source>
        <strain>K12 / DH10B</strain>
    </source>
</reference>
<dbReference type="EC" id="3.1.-.-" evidence="1"/>
<dbReference type="EMBL" id="CP000948">
    <property type="protein sequence ID" value="ACB04043.1"/>
    <property type="molecule type" value="Genomic_DNA"/>
</dbReference>
<dbReference type="SMR" id="B1XFA9"/>
<dbReference type="KEGG" id="ecd:ECDH10B_3124"/>
<dbReference type="HOGENOM" id="CLU_098240_3_0_6"/>
<dbReference type="GO" id="GO:0005829">
    <property type="term" value="C:cytosol"/>
    <property type="evidence" value="ECO:0007669"/>
    <property type="project" value="TreeGrafter"/>
</dbReference>
<dbReference type="GO" id="GO:0004518">
    <property type="term" value="F:nuclease activity"/>
    <property type="evidence" value="ECO:0007669"/>
    <property type="project" value="UniProtKB-KW"/>
</dbReference>
<dbReference type="GO" id="GO:0000967">
    <property type="term" value="P:rRNA 5'-end processing"/>
    <property type="evidence" value="ECO:0007669"/>
    <property type="project" value="UniProtKB-UniRule"/>
</dbReference>
<dbReference type="CDD" id="cd16964">
    <property type="entry name" value="YqgF"/>
    <property type="match status" value="1"/>
</dbReference>
<dbReference type="FunFam" id="3.30.420.140:FF:000002">
    <property type="entry name" value="Putative pre-16S rRNA nuclease"/>
    <property type="match status" value="1"/>
</dbReference>
<dbReference type="Gene3D" id="3.30.420.140">
    <property type="entry name" value="YqgF/RNase H-like domain"/>
    <property type="match status" value="1"/>
</dbReference>
<dbReference type="HAMAP" id="MF_00651">
    <property type="entry name" value="Nuclease_YqgF"/>
    <property type="match status" value="1"/>
</dbReference>
<dbReference type="InterPro" id="IPR012337">
    <property type="entry name" value="RNaseH-like_sf"/>
</dbReference>
<dbReference type="InterPro" id="IPR005227">
    <property type="entry name" value="YqgF"/>
</dbReference>
<dbReference type="InterPro" id="IPR006641">
    <property type="entry name" value="YqgF/RNaseH-like_dom"/>
</dbReference>
<dbReference type="InterPro" id="IPR037027">
    <property type="entry name" value="YqgF/RNaseH-like_dom_sf"/>
</dbReference>
<dbReference type="NCBIfam" id="TIGR00250">
    <property type="entry name" value="RNAse_H_YqgF"/>
    <property type="match status" value="1"/>
</dbReference>
<dbReference type="PANTHER" id="PTHR33317">
    <property type="entry name" value="POLYNUCLEOTIDYL TRANSFERASE, RIBONUCLEASE H-LIKE SUPERFAMILY PROTEIN"/>
    <property type="match status" value="1"/>
</dbReference>
<dbReference type="PANTHER" id="PTHR33317:SF4">
    <property type="entry name" value="POLYNUCLEOTIDYL TRANSFERASE, RIBONUCLEASE H-LIKE SUPERFAMILY PROTEIN"/>
    <property type="match status" value="1"/>
</dbReference>
<dbReference type="Pfam" id="PF03652">
    <property type="entry name" value="RuvX"/>
    <property type="match status" value="1"/>
</dbReference>
<dbReference type="SMART" id="SM00732">
    <property type="entry name" value="YqgFc"/>
    <property type="match status" value="1"/>
</dbReference>
<dbReference type="SUPFAM" id="SSF53098">
    <property type="entry name" value="Ribonuclease H-like"/>
    <property type="match status" value="1"/>
</dbReference>
<feature type="chain" id="PRO_1000131031" description="Putative pre-16S rRNA nuclease">
    <location>
        <begin position="1"/>
        <end position="138"/>
    </location>
</feature>
<comment type="function">
    <text evidence="1">Could be a nuclease involved in processing of the 5'-end of pre-16S rRNA.</text>
</comment>
<comment type="subcellular location">
    <subcellularLocation>
        <location evidence="1">Cytoplasm</location>
    </subcellularLocation>
</comment>
<comment type="similarity">
    <text evidence="1">Belongs to the YqgF nuclease family.</text>
</comment>
<accession>B1XFA9</accession>
<keyword id="KW-0963">Cytoplasm</keyword>
<keyword id="KW-0378">Hydrolase</keyword>
<keyword id="KW-0540">Nuclease</keyword>
<keyword id="KW-0690">Ribosome biogenesis</keyword>
<sequence>MSGTLLAFDFGTKSIGVAVGQRITGTARPLPAIKAQDGTPDWNIIERLLKEWQPDEIIVGLPLNMDGTEQPLTARARKFANRIHGRFGVEVKLHDERLSTVEARSGLFEQGGYRALNKGKVDSASAVIILESYFEQGY</sequence>
<evidence type="ECO:0000255" key="1">
    <source>
        <dbReference type="HAMAP-Rule" id="MF_00651"/>
    </source>
</evidence>
<gene>
    <name evidence="1" type="primary">yqgF</name>
    <name type="ordered locus">ECDH10B_3124</name>
</gene>
<proteinExistence type="inferred from homology"/>
<protein>
    <recommendedName>
        <fullName evidence="1">Putative pre-16S rRNA nuclease</fullName>
        <ecNumber evidence="1">3.1.-.-</ecNumber>
    </recommendedName>
</protein>
<name>YQGF_ECODH</name>
<organism>
    <name type="scientific">Escherichia coli (strain K12 / DH10B)</name>
    <dbReference type="NCBI Taxonomy" id="316385"/>
    <lineage>
        <taxon>Bacteria</taxon>
        <taxon>Pseudomonadati</taxon>
        <taxon>Pseudomonadota</taxon>
        <taxon>Gammaproteobacteria</taxon>
        <taxon>Enterobacterales</taxon>
        <taxon>Enterobacteriaceae</taxon>
        <taxon>Escherichia</taxon>
    </lineage>
</organism>